<gene>
    <name evidence="1" type="primary">ileS</name>
    <name type="ordered locus">RP617</name>
</gene>
<organism>
    <name type="scientific">Rickettsia prowazekii (strain Madrid E)</name>
    <dbReference type="NCBI Taxonomy" id="272947"/>
    <lineage>
        <taxon>Bacteria</taxon>
        <taxon>Pseudomonadati</taxon>
        <taxon>Pseudomonadota</taxon>
        <taxon>Alphaproteobacteria</taxon>
        <taxon>Rickettsiales</taxon>
        <taxon>Rickettsiaceae</taxon>
        <taxon>Rickettsieae</taxon>
        <taxon>Rickettsia</taxon>
        <taxon>typhus group</taxon>
    </lineage>
</organism>
<protein>
    <recommendedName>
        <fullName evidence="1">Isoleucine--tRNA ligase</fullName>
        <ecNumber evidence="1">6.1.1.5</ecNumber>
    </recommendedName>
    <alternativeName>
        <fullName evidence="1">Isoleucyl-tRNA synthetase</fullName>
        <shortName evidence="1">IleRS</shortName>
    </alternativeName>
</protein>
<proteinExistence type="inferred from homology"/>
<feature type="chain" id="PRO_0000098560" description="Isoleucine--tRNA ligase">
    <location>
        <begin position="1"/>
        <end position="1086"/>
    </location>
</feature>
<feature type="short sequence motif" description="'HIGH' region">
    <location>
        <begin position="53"/>
        <end position="63"/>
    </location>
</feature>
<feature type="short sequence motif" description="'KMSKS' region">
    <location>
        <begin position="624"/>
        <end position="628"/>
    </location>
</feature>
<feature type="binding site" evidence="1">
    <location>
        <position position="627"/>
    </location>
    <ligand>
        <name>ATP</name>
        <dbReference type="ChEBI" id="CHEBI:30616"/>
    </ligand>
</feature>
<name>SYI_RICPR</name>
<sequence length="1086" mass="125637">MTNTKYYPDVSANVDFAAIEQEILKFWQNNNIFQKSIDYRNGESEFIFYDGPPFANGLPHYGHLLTGFIKDVYARYKTIKGKKVERRFGWDCHGLPAEMQSEKELGISGRIAITNFGIEKFNNHCRASVMQYASEWEQYVTRQARWVAFKNAYKTMDKNFMESVLWAFKELYNKDLLYESMRVMPYSWACETPLSNFETRLDNAYRERTDKAITVSFVLNEVTLINGIISQKSDMKEGDNFKEYRILAWTTTPWTLPANLALAVGSDIDYAFVDKNEVCYIIAASSVAKYAKELGLSGKENFEIIKGLKLQGLSYKPLFNYFENHPNSFKIFASDFVVEGDGTGIVHMAPGFGEDDQILCESKGIELVCPVDNSGKFTKEIPDLEGVQVFDANDKIIIKLKEQGNWIKTEQYIHNYPHCWRTDTPLIYKAVPSWYVRVTKFKDRMVELNQQINWIPHNVKDNLFGKWLENARDWSISRNRFWGTPLPVWKSDDPKYPRIDVYGSIEEIEKDFGVKINDLHRPFIDELTRTNPDDPTGKSTMRRIDDVFDCWFESGSMPYGQVHYPFENKKWFVEHFPADFIVEYSSQTRGWFYTLMVLSTALFDRPPFLNCICHGVILDATGQKLSKRLNNYADPLELFDKYGSDALRVTMLSSNVVKGQELLIDKDGKMVFDTLRLFIKPIWNAYHFFTIYANADSLKGTLNFASQNVLDVYILSKLKIAVNKIEESLDNFDTQTAYHAVSEFFEVLNNWYIRRSRARFWKNEKDTDKQNAYNTLYSCLKIMTIAMSALIPMISETIYQGLHNTAITQLNCLLSEGKHIVQNPMSDTQDYNTSVHLCNYPTLSDFEINYELVSTMDNVLDICSNSLFIRSTENIRVRQPLACITIISKHNNNLKDFEDLIKDEINVKTVIYRDDLENYARKKLSLNFAILGKRLPHKMKAIIDAAKKGEWEATTLGLAICGEILNSDEYTLILEPYSHIKGTANFDNNSSLLILNLELTSELIEEGYARDIVRFIQYARKEADFSITDRILIEIISEFDLSKIIDHYGDFIKEQTLGEFAKNFTPDYVSKVALENNQIQLKVKRL</sequence>
<evidence type="ECO:0000255" key="1">
    <source>
        <dbReference type="HAMAP-Rule" id="MF_02003"/>
    </source>
</evidence>
<reference key="1">
    <citation type="journal article" date="1998" name="Nature">
        <title>The genome sequence of Rickettsia prowazekii and the origin of mitochondria.</title>
        <authorList>
            <person name="Andersson S.G.E."/>
            <person name="Zomorodipour A."/>
            <person name="Andersson J.O."/>
            <person name="Sicheritz-Ponten T."/>
            <person name="Alsmark U.C.M."/>
            <person name="Podowski R.M."/>
            <person name="Naeslund A.K."/>
            <person name="Eriksson A.-S."/>
            <person name="Winkler H.H."/>
            <person name="Kurland C.G."/>
        </authorList>
    </citation>
    <scope>NUCLEOTIDE SEQUENCE [LARGE SCALE GENOMIC DNA]</scope>
    <source>
        <strain>Madrid E</strain>
    </source>
</reference>
<keyword id="KW-0030">Aminoacyl-tRNA synthetase</keyword>
<keyword id="KW-0067">ATP-binding</keyword>
<keyword id="KW-0963">Cytoplasm</keyword>
<keyword id="KW-0436">Ligase</keyword>
<keyword id="KW-0479">Metal-binding</keyword>
<keyword id="KW-0547">Nucleotide-binding</keyword>
<keyword id="KW-0648">Protein biosynthesis</keyword>
<keyword id="KW-1185">Reference proteome</keyword>
<keyword id="KW-0862">Zinc</keyword>
<accession>Q9ZCU4</accession>
<comment type="function">
    <text evidence="1">Catalyzes the attachment of isoleucine to tRNA(Ile). As IleRS can inadvertently accommodate and process structurally similar amino acids such as valine, to avoid such errors it has two additional distinct tRNA(Ile)-dependent editing activities. One activity is designated as 'pretransfer' editing and involves the hydrolysis of activated Val-AMP. The other activity is designated 'posttransfer' editing and involves deacylation of mischarged Val-tRNA(Ile).</text>
</comment>
<comment type="catalytic activity">
    <reaction evidence="1">
        <text>tRNA(Ile) + L-isoleucine + ATP = L-isoleucyl-tRNA(Ile) + AMP + diphosphate</text>
        <dbReference type="Rhea" id="RHEA:11060"/>
        <dbReference type="Rhea" id="RHEA-COMP:9666"/>
        <dbReference type="Rhea" id="RHEA-COMP:9695"/>
        <dbReference type="ChEBI" id="CHEBI:30616"/>
        <dbReference type="ChEBI" id="CHEBI:33019"/>
        <dbReference type="ChEBI" id="CHEBI:58045"/>
        <dbReference type="ChEBI" id="CHEBI:78442"/>
        <dbReference type="ChEBI" id="CHEBI:78528"/>
        <dbReference type="ChEBI" id="CHEBI:456215"/>
        <dbReference type="EC" id="6.1.1.5"/>
    </reaction>
</comment>
<comment type="cofactor">
    <cofactor evidence="1">
        <name>Zn(2+)</name>
        <dbReference type="ChEBI" id="CHEBI:29105"/>
    </cofactor>
</comment>
<comment type="subunit">
    <text evidence="1">Monomer.</text>
</comment>
<comment type="subcellular location">
    <subcellularLocation>
        <location evidence="1">Cytoplasm</location>
    </subcellularLocation>
</comment>
<comment type="domain">
    <text evidence="1">IleRS has two distinct active sites: one for aminoacylation and one for editing. The misactivated valine is translocated from the active site to the editing site, which sterically excludes the correctly activated isoleucine. The single editing site contains two valyl binding pockets, one specific for each substrate (Val-AMP or Val-tRNA(Ile)).</text>
</comment>
<comment type="similarity">
    <text evidence="1">Belongs to the class-I aminoacyl-tRNA synthetase family. IleS type 2 subfamily.</text>
</comment>
<dbReference type="EC" id="6.1.1.5" evidence="1"/>
<dbReference type="EMBL" id="AJ235272">
    <property type="protein sequence ID" value="CAA15060.1"/>
    <property type="molecule type" value="Genomic_DNA"/>
</dbReference>
<dbReference type="PIR" id="B71667">
    <property type="entry name" value="B71667"/>
</dbReference>
<dbReference type="RefSeq" id="NP_220984.1">
    <property type="nucleotide sequence ID" value="NC_000963.1"/>
</dbReference>
<dbReference type="RefSeq" id="WP_004596290.1">
    <property type="nucleotide sequence ID" value="NC_000963.1"/>
</dbReference>
<dbReference type="SMR" id="Q9ZCU4"/>
<dbReference type="STRING" id="272947.gene:17555696"/>
<dbReference type="EnsemblBacteria" id="CAA15060">
    <property type="protein sequence ID" value="CAA15060"/>
    <property type="gene ID" value="CAA15060"/>
</dbReference>
<dbReference type="GeneID" id="57569742"/>
<dbReference type="KEGG" id="rpr:RP617"/>
<dbReference type="PATRIC" id="fig|272947.5.peg.636"/>
<dbReference type="eggNOG" id="COG0060">
    <property type="taxonomic scope" value="Bacteria"/>
</dbReference>
<dbReference type="HOGENOM" id="CLU_001493_1_1_5"/>
<dbReference type="OrthoDB" id="9810365at2"/>
<dbReference type="Proteomes" id="UP000002480">
    <property type="component" value="Chromosome"/>
</dbReference>
<dbReference type="GO" id="GO:0005737">
    <property type="term" value="C:cytoplasm"/>
    <property type="evidence" value="ECO:0007669"/>
    <property type="project" value="UniProtKB-SubCell"/>
</dbReference>
<dbReference type="GO" id="GO:0002161">
    <property type="term" value="F:aminoacyl-tRNA deacylase activity"/>
    <property type="evidence" value="ECO:0007669"/>
    <property type="project" value="InterPro"/>
</dbReference>
<dbReference type="GO" id="GO:0005524">
    <property type="term" value="F:ATP binding"/>
    <property type="evidence" value="ECO:0007669"/>
    <property type="project" value="UniProtKB-UniRule"/>
</dbReference>
<dbReference type="GO" id="GO:0004822">
    <property type="term" value="F:isoleucine-tRNA ligase activity"/>
    <property type="evidence" value="ECO:0007669"/>
    <property type="project" value="UniProtKB-UniRule"/>
</dbReference>
<dbReference type="GO" id="GO:0000049">
    <property type="term" value="F:tRNA binding"/>
    <property type="evidence" value="ECO:0007669"/>
    <property type="project" value="InterPro"/>
</dbReference>
<dbReference type="GO" id="GO:0008270">
    <property type="term" value="F:zinc ion binding"/>
    <property type="evidence" value="ECO:0007669"/>
    <property type="project" value="UniProtKB-UniRule"/>
</dbReference>
<dbReference type="GO" id="GO:0006428">
    <property type="term" value="P:isoleucyl-tRNA aminoacylation"/>
    <property type="evidence" value="ECO:0007669"/>
    <property type="project" value="UniProtKB-UniRule"/>
</dbReference>
<dbReference type="CDD" id="cd07961">
    <property type="entry name" value="Anticodon_Ia_Ile_ABEc"/>
    <property type="match status" value="1"/>
</dbReference>
<dbReference type="CDD" id="cd00818">
    <property type="entry name" value="IleRS_core"/>
    <property type="match status" value="1"/>
</dbReference>
<dbReference type="FunFam" id="3.40.50.620:FF:000075">
    <property type="entry name" value="Isoleucine--tRNA ligase"/>
    <property type="match status" value="1"/>
</dbReference>
<dbReference type="FunFam" id="3.40.50.620:FF:000241">
    <property type="entry name" value="Isoleucine--tRNA ligase"/>
    <property type="match status" value="1"/>
</dbReference>
<dbReference type="Gene3D" id="3.40.50.620">
    <property type="entry name" value="HUPs"/>
    <property type="match status" value="2"/>
</dbReference>
<dbReference type="Gene3D" id="1.10.730.10">
    <property type="entry name" value="Isoleucyl-tRNA Synthetase, Domain 1"/>
    <property type="match status" value="1"/>
</dbReference>
<dbReference type="HAMAP" id="MF_02003">
    <property type="entry name" value="Ile_tRNA_synth_type2"/>
    <property type="match status" value="1"/>
</dbReference>
<dbReference type="InterPro" id="IPR001412">
    <property type="entry name" value="aa-tRNA-synth_I_CS"/>
</dbReference>
<dbReference type="InterPro" id="IPR002300">
    <property type="entry name" value="aa-tRNA-synth_Ia"/>
</dbReference>
<dbReference type="InterPro" id="IPR033709">
    <property type="entry name" value="Anticodon_Ile_ABEc"/>
</dbReference>
<dbReference type="InterPro" id="IPR002301">
    <property type="entry name" value="Ile-tRNA-ligase"/>
</dbReference>
<dbReference type="InterPro" id="IPR023586">
    <property type="entry name" value="Ile-tRNA-ligase_type2"/>
</dbReference>
<dbReference type="InterPro" id="IPR013155">
    <property type="entry name" value="M/V/L/I-tRNA-synth_anticd-bd"/>
</dbReference>
<dbReference type="InterPro" id="IPR014729">
    <property type="entry name" value="Rossmann-like_a/b/a_fold"/>
</dbReference>
<dbReference type="InterPro" id="IPR009080">
    <property type="entry name" value="tRNAsynth_Ia_anticodon-bd"/>
</dbReference>
<dbReference type="InterPro" id="IPR009008">
    <property type="entry name" value="Val/Leu/Ile-tRNA-synth_edit"/>
</dbReference>
<dbReference type="NCBIfam" id="TIGR00392">
    <property type="entry name" value="ileS"/>
    <property type="match status" value="1"/>
</dbReference>
<dbReference type="PANTHER" id="PTHR42780:SF1">
    <property type="entry name" value="ISOLEUCINE--TRNA LIGASE, CYTOPLASMIC"/>
    <property type="match status" value="1"/>
</dbReference>
<dbReference type="PANTHER" id="PTHR42780">
    <property type="entry name" value="SOLEUCYL-TRNA SYNTHETASE"/>
    <property type="match status" value="1"/>
</dbReference>
<dbReference type="Pfam" id="PF08264">
    <property type="entry name" value="Anticodon_1"/>
    <property type="match status" value="1"/>
</dbReference>
<dbReference type="Pfam" id="PF19302">
    <property type="entry name" value="DUF5915"/>
    <property type="match status" value="1"/>
</dbReference>
<dbReference type="Pfam" id="PF00133">
    <property type="entry name" value="tRNA-synt_1"/>
    <property type="match status" value="1"/>
</dbReference>
<dbReference type="PRINTS" id="PR00984">
    <property type="entry name" value="TRNASYNTHILE"/>
</dbReference>
<dbReference type="SUPFAM" id="SSF47323">
    <property type="entry name" value="Anticodon-binding domain of a subclass of class I aminoacyl-tRNA synthetases"/>
    <property type="match status" value="1"/>
</dbReference>
<dbReference type="SUPFAM" id="SSF52374">
    <property type="entry name" value="Nucleotidylyl transferase"/>
    <property type="match status" value="1"/>
</dbReference>
<dbReference type="SUPFAM" id="SSF50677">
    <property type="entry name" value="ValRS/IleRS/LeuRS editing domain"/>
    <property type="match status" value="1"/>
</dbReference>
<dbReference type="PROSITE" id="PS00178">
    <property type="entry name" value="AA_TRNA_LIGASE_I"/>
    <property type="match status" value="1"/>
</dbReference>